<protein>
    <recommendedName>
        <fullName evidence="1">Pyrrolidone-carboxylate peptidase</fullName>
        <ecNumber evidence="1">3.4.19.3</ecNumber>
    </recommendedName>
    <alternativeName>
        <fullName evidence="1">5-oxoprolyl-peptidase</fullName>
    </alternativeName>
    <alternativeName>
        <fullName evidence="1">Pyroglutamyl-peptidase I</fullName>
        <shortName evidence="1">PGP-I</shortName>
        <shortName evidence="1">Pyrase</shortName>
    </alternativeName>
</protein>
<evidence type="ECO:0000255" key="1">
    <source>
        <dbReference type="HAMAP-Rule" id="MF_00417"/>
    </source>
</evidence>
<gene>
    <name evidence="1" type="primary">pcp</name>
    <name type="ordered locus">BcerKBAB4_2869</name>
</gene>
<name>PCP_BACMK</name>
<keyword id="KW-0963">Cytoplasm</keyword>
<keyword id="KW-0378">Hydrolase</keyword>
<keyword id="KW-0645">Protease</keyword>
<keyword id="KW-0788">Thiol protease</keyword>
<accession>A9VKA7</accession>
<proteinExistence type="inferred from homology"/>
<organism>
    <name type="scientific">Bacillus mycoides (strain KBAB4)</name>
    <name type="common">Bacillus weihenstephanensis</name>
    <dbReference type="NCBI Taxonomy" id="315730"/>
    <lineage>
        <taxon>Bacteria</taxon>
        <taxon>Bacillati</taxon>
        <taxon>Bacillota</taxon>
        <taxon>Bacilli</taxon>
        <taxon>Bacillales</taxon>
        <taxon>Bacillaceae</taxon>
        <taxon>Bacillus</taxon>
        <taxon>Bacillus cereus group</taxon>
    </lineage>
</organism>
<comment type="function">
    <text evidence="1">Removes 5-oxoproline from various penultimate amino acid residues except L-proline.</text>
</comment>
<comment type="catalytic activity">
    <reaction evidence="1">
        <text>Release of an N-terminal pyroglutamyl group from a polypeptide, the second amino acid generally not being Pro.</text>
        <dbReference type="EC" id="3.4.19.3"/>
    </reaction>
</comment>
<comment type="subunit">
    <text evidence="1">Homotetramer.</text>
</comment>
<comment type="subcellular location">
    <subcellularLocation>
        <location evidence="1">Cytoplasm</location>
    </subcellularLocation>
</comment>
<comment type="similarity">
    <text evidence="1">Belongs to the peptidase C15 family.</text>
</comment>
<feature type="chain" id="PRO_1000123990" description="Pyrrolidone-carboxylate peptidase">
    <location>
        <begin position="1"/>
        <end position="215"/>
    </location>
</feature>
<feature type="active site" evidence="1">
    <location>
        <position position="80"/>
    </location>
</feature>
<feature type="active site" evidence="1">
    <location>
        <position position="143"/>
    </location>
</feature>
<feature type="active site" evidence="1">
    <location>
        <position position="167"/>
    </location>
</feature>
<dbReference type="EC" id="3.4.19.3" evidence="1"/>
<dbReference type="EMBL" id="CP000903">
    <property type="protein sequence ID" value="ABY44062.1"/>
    <property type="molecule type" value="Genomic_DNA"/>
</dbReference>
<dbReference type="RefSeq" id="WP_002142348.1">
    <property type="nucleotide sequence ID" value="NC_010184.1"/>
</dbReference>
<dbReference type="SMR" id="A9VKA7"/>
<dbReference type="MEROPS" id="C15.001"/>
<dbReference type="KEGG" id="bwe:BcerKBAB4_2869"/>
<dbReference type="eggNOG" id="COG2039">
    <property type="taxonomic scope" value="Bacteria"/>
</dbReference>
<dbReference type="HOGENOM" id="CLU_043960_4_0_9"/>
<dbReference type="Proteomes" id="UP000002154">
    <property type="component" value="Chromosome"/>
</dbReference>
<dbReference type="GO" id="GO:0005829">
    <property type="term" value="C:cytosol"/>
    <property type="evidence" value="ECO:0007669"/>
    <property type="project" value="InterPro"/>
</dbReference>
<dbReference type="GO" id="GO:0016920">
    <property type="term" value="F:pyroglutamyl-peptidase activity"/>
    <property type="evidence" value="ECO:0007669"/>
    <property type="project" value="UniProtKB-UniRule"/>
</dbReference>
<dbReference type="GO" id="GO:0006508">
    <property type="term" value="P:proteolysis"/>
    <property type="evidence" value="ECO:0007669"/>
    <property type="project" value="UniProtKB-KW"/>
</dbReference>
<dbReference type="CDD" id="cd00501">
    <property type="entry name" value="Peptidase_C15"/>
    <property type="match status" value="1"/>
</dbReference>
<dbReference type="FunFam" id="3.40.630.20:FF:000001">
    <property type="entry name" value="Pyrrolidone-carboxylate peptidase"/>
    <property type="match status" value="1"/>
</dbReference>
<dbReference type="Gene3D" id="3.40.630.20">
    <property type="entry name" value="Peptidase C15, pyroglutamyl peptidase I-like"/>
    <property type="match status" value="1"/>
</dbReference>
<dbReference type="HAMAP" id="MF_00417">
    <property type="entry name" value="Pyrrolid_peptidase"/>
    <property type="match status" value="1"/>
</dbReference>
<dbReference type="InterPro" id="IPR000816">
    <property type="entry name" value="Peptidase_C15"/>
</dbReference>
<dbReference type="InterPro" id="IPR016125">
    <property type="entry name" value="Peptidase_C15-like"/>
</dbReference>
<dbReference type="InterPro" id="IPR036440">
    <property type="entry name" value="Peptidase_C15-like_sf"/>
</dbReference>
<dbReference type="InterPro" id="IPR029762">
    <property type="entry name" value="PGP-I_bact-type"/>
</dbReference>
<dbReference type="InterPro" id="IPR033694">
    <property type="entry name" value="PGPEP1_Cys_AS"/>
</dbReference>
<dbReference type="InterPro" id="IPR033693">
    <property type="entry name" value="PGPEP1_Glu_AS"/>
</dbReference>
<dbReference type="NCBIfam" id="NF009676">
    <property type="entry name" value="PRK13197.1"/>
    <property type="match status" value="1"/>
</dbReference>
<dbReference type="NCBIfam" id="TIGR00504">
    <property type="entry name" value="pyro_pdase"/>
    <property type="match status" value="1"/>
</dbReference>
<dbReference type="PANTHER" id="PTHR23402">
    <property type="entry name" value="PROTEASE FAMILY C15 PYROGLUTAMYL-PEPTIDASE I-RELATED"/>
    <property type="match status" value="1"/>
</dbReference>
<dbReference type="PANTHER" id="PTHR23402:SF1">
    <property type="entry name" value="PYROGLUTAMYL-PEPTIDASE I"/>
    <property type="match status" value="1"/>
</dbReference>
<dbReference type="Pfam" id="PF01470">
    <property type="entry name" value="Peptidase_C15"/>
    <property type="match status" value="1"/>
</dbReference>
<dbReference type="PIRSF" id="PIRSF015592">
    <property type="entry name" value="Prld-crbxl_pptds"/>
    <property type="match status" value="1"/>
</dbReference>
<dbReference type="PRINTS" id="PR00706">
    <property type="entry name" value="PYROGLUPTASE"/>
</dbReference>
<dbReference type="SUPFAM" id="SSF53182">
    <property type="entry name" value="Pyrrolidone carboxyl peptidase (pyroglutamate aminopeptidase)"/>
    <property type="match status" value="1"/>
</dbReference>
<dbReference type="PROSITE" id="PS01334">
    <property type="entry name" value="PYRASE_CYS"/>
    <property type="match status" value="1"/>
</dbReference>
<dbReference type="PROSITE" id="PS01333">
    <property type="entry name" value="PYRASE_GLU"/>
    <property type="match status" value="1"/>
</dbReference>
<reference key="1">
    <citation type="journal article" date="2008" name="Chem. Biol. Interact.">
        <title>Extending the Bacillus cereus group genomics to putative food-borne pathogens of different toxicity.</title>
        <authorList>
            <person name="Lapidus A."/>
            <person name="Goltsman E."/>
            <person name="Auger S."/>
            <person name="Galleron N."/>
            <person name="Segurens B."/>
            <person name="Dossat C."/>
            <person name="Land M.L."/>
            <person name="Broussolle V."/>
            <person name="Brillard J."/>
            <person name="Guinebretiere M.-H."/>
            <person name="Sanchis V."/>
            <person name="Nguen-the C."/>
            <person name="Lereclus D."/>
            <person name="Richardson P."/>
            <person name="Wincker P."/>
            <person name="Weissenbach J."/>
            <person name="Ehrlich S.D."/>
            <person name="Sorokin A."/>
        </authorList>
    </citation>
    <scope>NUCLEOTIDE SEQUENCE [LARGE SCALE GENOMIC DNA]</scope>
    <source>
        <strain>KBAB4</strain>
    </source>
</reference>
<sequence>MKTVLLTGFDPFGGESINPAWEVAKSLHEKTIGEYKIISKQVPTVFHKSIRVLKEYIEELSPEMIICIGQAGGRPDITIERVAINIDDARIADNEGNKPVDMPVVEEGPIAYWSTLPMKAIVKKLREEGIPSSVSQTAGTFVCNHLFYGLMHELEKHDKKIKGGFVHIPFLPEQASNYPGQPSMSLSTIRKGIELAIEVATEVEVDIVACGGATH</sequence>